<keyword id="KW-0903">Direct protein sequencing</keyword>
<keyword id="KW-0285">Flavoprotein</keyword>
<keyword id="KW-0288">FMN</keyword>
<keyword id="KW-0503">Monooxygenase</keyword>
<keyword id="KW-0560">Oxidoreductase</keyword>
<dbReference type="EMBL" id="U21215">
    <property type="protein sequence ID" value="AAA83563.1"/>
    <property type="molecule type" value="Genomic_DNA"/>
</dbReference>
<dbReference type="RefSeq" id="WP_005321872.1">
    <property type="nucleotide sequence ID" value="NZ_JBIYFA010000001.1"/>
</dbReference>
<dbReference type="SMR" id="P54991"/>
<dbReference type="STRING" id="38300.SPRI_0185"/>
<dbReference type="OMA" id="FLMGVGH"/>
<dbReference type="OrthoDB" id="3265338at2"/>
<dbReference type="GO" id="GO:0004497">
    <property type="term" value="F:monooxygenase activity"/>
    <property type="evidence" value="ECO:0007669"/>
    <property type="project" value="UniProtKB-KW"/>
</dbReference>
<dbReference type="GO" id="GO:0016705">
    <property type="term" value="F:oxidoreductase activity, acting on paired donors, with incorporation or reduction of molecular oxygen"/>
    <property type="evidence" value="ECO:0007669"/>
    <property type="project" value="InterPro"/>
</dbReference>
<dbReference type="CDD" id="cd01095">
    <property type="entry name" value="Nitrilotriacetate_monoxgenase"/>
    <property type="match status" value="1"/>
</dbReference>
<dbReference type="Gene3D" id="3.20.20.30">
    <property type="entry name" value="Luciferase-like domain"/>
    <property type="match status" value="1"/>
</dbReference>
<dbReference type="InterPro" id="IPR051260">
    <property type="entry name" value="Diverse_substr_monoxygenases"/>
</dbReference>
<dbReference type="InterPro" id="IPR011251">
    <property type="entry name" value="Luciferase-like_dom"/>
</dbReference>
<dbReference type="InterPro" id="IPR036661">
    <property type="entry name" value="Luciferase-like_sf"/>
</dbReference>
<dbReference type="InterPro" id="IPR016215">
    <property type="entry name" value="NTA_MOA"/>
</dbReference>
<dbReference type="NCBIfam" id="TIGR03860">
    <property type="entry name" value="FMN_nitrolo"/>
    <property type="match status" value="1"/>
</dbReference>
<dbReference type="PANTHER" id="PTHR30011">
    <property type="entry name" value="ALKANESULFONATE MONOOXYGENASE-RELATED"/>
    <property type="match status" value="1"/>
</dbReference>
<dbReference type="PANTHER" id="PTHR30011:SF16">
    <property type="entry name" value="C2H2 FINGER DOMAIN TRANSCRIPTION FACTOR (EUROFUNG)-RELATED"/>
    <property type="match status" value="1"/>
</dbReference>
<dbReference type="Pfam" id="PF00296">
    <property type="entry name" value="Bac_luciferase"/>
    <property type="match status" value="1"/>
</dbReference>
<dbReference type="PIRSF" id="PIRSF000337">
    <property type="entry name" value="NTA_MOA"/>
    <property type="match status" value="1"/>
</dbReference>
<dbReference type="SUPFAM" id="SSF51679">
    <property type="entry name" value="Bacterial luciferase-like"/>
    <property type="match status" value="1"/>
</dbReference>
<accession>P54991</accession>
<evidence type="ECO:0000250" key="1">
    <source>
        <dbReference type="UniProtKB" id="O34974"/>
    </source>
</evidence>
<evidence type="ECO:0000269" key="2">
    <source>
    </source>
</evidence>
<evidence type="ECO:0000305" key="3"/>
<comment type="function">
    <text>Catalyzes the oxidation of the proline residue of pristinamycin IIB (PIIB) to pristinamycin IIA (PIIA).</text>
</comment>
<comment type="cofactor">
    <cofactor>
        <name>FMN</name>
        <dbReference type="ChEBI" id="CHEBI:58210"/>
    </cofactor>
</comment>
<comment type="subunit">
    <text>Heterodimer of two subunits, SnaA and SnaB.</text>
</comment>
<comment type="similarity">
    <text evidence="3">Belongs to the NtaA/SnaA/DszA monooxygenase family.</text>
</comment>
<sequence length="422" mass="46504">MTAPRRRITLAGIIDGPGGHVAAWRHPATKADAQLDFEFHRDNARTLERGLFDAVFIADIVAVWGTRLDSLCRTSRTEHFEPLTLLAAYAAVTEHIGLCATATTTYNEPAHIAARFASLDHLSGGRAGWNVVTSAAPWESANFGFPEHLEHGKRYERAEEFIDVVKKLWDSDGRPVDHRGTHFEAPGPLGIARPPQGRPVIIQAGSSPVGREFAARHAEVIFTRHNRLSDAQDFYGDLKARVARHGRDPEKVLVWPTLAPIVAATDTEAKQRLQELQDLTHDHVALRTLQDHLGDVDLSAYPIDGPVPDIPYTNQSQSTTERLIGLARRENLSIRELALRLMGDIVVGTPEQLADHMESWFTGRGADGFNIDFPYLPGSADDFVDHVVPELQRRGLYRSGYEGTTLRANLGIDAPRKAGAAA</sequence>
<reference key="1">
    <citation type="journal article" date="1995" name="J. Bacteriol.">
        <title>Cloning and analysis of structural genes from Streptomyces pristinaespiralis encoding enzymes involved in the conversion of pristinamycin IIB to pristinamycin IIA (PIIA): PIIA synthase and NADH:riboflavin 5'-phosphate oxidoreductase.</title>
        <authorList>
            <person name="Blanc V."/>
            <person name="Lagneaux D."/>
            <person name="Didier P."/>
            <person name="Gil P."/>
            <person name="Lacroix P."/>
            <person name="Crouzet J."/>
        </authorList>
    </citation>
    <scope>NUCLEOTIDE SEQUENCE [GENOMIC DNA]</scope>
    <source>
        <strain>SP92</strain>
    </source>
</reference>
<reference key="2">
    <citation type="journal article" date="1995" name="J. Bacteriol.">
        <title>Purification of the two-enzyme system catalyzing the oxidation of the D-proline residue of pristinamycin IIB during the last step of pristinamycin IIA biosynthesis.</title>
        <authorList>
            <person name="Thibaut D."/>
            <person name="Ratet N."/>
            <person name="Bisch D."/>
            <person name="Faucher D."/>
            <person name="Debussche L."/>
            <person name="Blanche F."/>
        </authorList>
    </citation>
    <scope>PROTEIN SEQUENCE OF 2-19 AND 365-384</scope>
</reference>
<name>SNAA_STRPR</name>
<feature type="initiator methionine" description="Removed" evidence="2">
    <location>
        <position position="1"/>
    </location>
</feature>
<feature type="chain" id="PRO_0000072000" description="Pristinamycin IIA synthase subunit A">
    <location>
        <begin position="2"/>
        <end position="422"/>
    </location>
</feature>
<feature type="binding site" evidence="1">
    <location>
        <position position="59"/>
    </location>
    <ligand>
        <name>FMN</name>
        <dbReference type="ChEBI" id="CHEBI:58210"/>
    </ligand>
</feature>
<feature type="binding site" evidence="1">
    <location>
        <position position="101"/>
    </location>
    <ligand>
        <name>FMN</name>
        <dbReference type="ChEBI" id="CHEBI:58210"/>
    </ligand>
</feature>
<feature type="binding site" evidence="1">
    <location>
        <position position="151"/>
    </location>
    <ligand>
        <name>FMN</name>
        <dbReference type="ChEBI" id="CHEBI:58210"/>
    </ligand>
</feature>
<feature type="binding site" evidence="1">
    <location>
        <position position="155"/>
    </location>
    <ligand>
        <name>FMN</name>
        <dbReference type="ChEBI" id="CHEBI:58210"/>
    </ligand>
</feature>
<feature type="binding site" evidence="1">
    <location>
        <position position="206"/>
    </location>
    <ligand>
        <name>FMN</name>
        <dbReference type="ChEBI" id="CHEBI:58210"/>
    </ligand>
</feature>
<feature type="binding site" evidence="1">
    <location>
        <position position="207"/>
    </location>
    <ligand>
        <name>FMN</name>
        <dbReference type="ChEBI" id="CHEBI:58210"/>
    </ligand>
</feature>
<organism>
    <name type="scientific">Streptomyces pristinaespiralis</name>
    <dbReference type="NCBI Taxonomy" id="38300"/>
    <lineage>
        <taxon>Bacteria</taxon>
        <taxon>Bacillati</taxon>
        <taxon>Actinomycetota</taxon>
        <taxon>Actinomycetes</taxon>
        <taxon>Kitasatosporales</taxon>
        <taxon>Streptomycetaceae</taxon>
        <taxon>Streptomyces</taxon>
    </lineage>
</organism>
<protein>
    <recommendedName>
        <fullName>Pristinamycin IIA synthase subunit A</fullName>
        <shortName>PIIA synthase subunit A</shortName>
    </recommendedName>
</protein>
<gene>
    <name type="primary">snaA</name>
</gene>
<proteinExistence type="evidence at protein level"/>